<reference key="1">
    <citation type="journal article" date="2001" name="Nature">
        <title>Genome sequence of enterohaemorrhagic Escherichia coli O157:H7.</title>
        <authorList>
            <person name="Perna N.T."/>
            <person name="Plunkett G. III"/>
            <person name="Burland V."/>
            <person name="Mau B."/>
            <person name="Glasner J.D."/>
            <person name="Rose D.J."/>
            <person name="Mayhew G.F."/>
            <person name="Evans P.S."/>
            <person name="Gregor J."/>
            <person name="Kirkpatrick H.A."/>
            <person name="Posfai G."/>
            <person name="Hackett J."/>
            <person name="Klink S."/>
            <person name="Boutin A."/>
            <person name="Shao Y."/>
            <person name="Miller L."/>
            <person name="Grotbeck E.J."/>
            <person name="Davis N.W."/>
            <person name="Lim A."/>
            <person name="Dimalanta E.T."/>
            <person name="Potamousis K."/>
            <person name="Apodaca J."/>
            <person name="Anantharaman T.S."/>
            <person name="Lin J."/>
            <person name="Yen G."/>
            <person name="Schwartz D.C."/>
            <person name="Welch R.A."/>
            <person name="Blattner F.R."/>
        </authorList>
    </citation>
    <scope>NUCLEOTIDE SEQUENCE [LARGE SCALE GENOMIC DNA]</scope>
    <source>
        <strain>O157:H7 / EDL933 / ATCC 700927 / EHEC</strain>
    </source>
</reference>
<reference key="2">
    <citation type="journal article" date="2001" name="DNA Res.">
        <title>Complete genome sequence of enterohemorrhagic Escherichia coli O157:H7 and genomic comparison with a laboratory strain K-12.</title>
        <authorList>
            <person name="Hayashi T."/>
            <person name="Makino K."/>
            <person name="Ohnishi M."/>
            <person name="Kurokawa K."/>
            <person name="Ishii K."/>
            <person name="Yokoyama K."/>
            <person name="Han C.-G."/>
            <person name="Ohtsubo E."/>
            <person name="Nakayama K."/>
            <person name="Murata T."/>
            <person name="Tanaka M."/>
            <person name="Tobe T."/>
            <person name="Iida T."/>
            <person name="Takami H."/>
            <person name="Honda T."/>
            <person name="Sasakawa C."/>
            <person name="Ogasawara N."/>
            <person name="Yasunaga T."/>
            <person name="Kuhara S."/>
            <person name="Shiba T."/>
            <person name="Hattori M."/>
            <person name="Shinagawa H."/>
        </authorList>
    </citation>
    <scope>NUCLEOTIDE SEQUENCE [LARGE SCALE GENOMIC DNA]</scope>
    <source>
        <strain>O157:H7 / Sakai / RIMD 0509952 / EHEC</strain>
    </source>
</reference>
<feature type="chain" id="PRO_0000079955" description="Replicative helicase loader DnaC">
    <location>
        <begin position="1"/>
        <end position="245"/>
    </location>
</feature>
<feature type="site" description="Probably involved in the interaction with the DnaB protein" evidence="1">
    <location>
        <position position="69"/>
    </location>
</feature>
<gene>
    <name type="primary">dnaC</name>
    <name type="ordered locus">Z5961</name>
    <name type="ordered locus">ECs5321</name>
</gene>
<sequence>MKNVGDLMQRLQKMMPAHIKPAFKTGEELLAWQKEQGAIRSAALERENRAMKMQRTFNRSGIRPLHQNCSFENYRVECEGQMNALSKARQYVEEFDGNIASFIFSGKPGTGKNHLAAAICNELLLRGKSVLIITVADIMSAMKDTFRNSGTSEEQLLNDLSNVDLLVIDEIGVQTESKYEKVIINQIVDRRSSSKRPTGMLTNSNMEEMTKLLGERVMDRMRLGNSLWVIFNWDSYRSRVTGKEY</sequence>
<proteinExistence type="inferred from homology"/>
<accession>P0AEF2</accession>
<accession>P07905</accession>
<keyword id="KW-0067">ATP-binding</keyword>
<keyword id="KW-0235">DNA replication</keyword>
<keyword id="KW-0238">DNA-binding</keyword>
<keyword id="KW-0378">Hydrolase</keyword>
<keyword id="KW-0547">Nucleotide-binding</keyword>
<keyword id="KW-0639">Primosome</keyword>
<keyword id="KW-1185">Reference proteome</keyword>
<evidence type="ECO:0000250" key="1">
    <source>
        <dbReference type="UniProtKB" id="P0AEF0"/>
    </source>
</evidence>
<evidence type="ECO:0000305" key="2"/>
<comment type="function">
    <text evidence="1">Required to load the replicative helix DnaB onto single-stranded (ss)DNA, to initiate chromosomal replication. DnaC alters the inter-domain and inter-subunit interactions of DnaB, inducing an open ring conformation that allows ssDNA to access the interior of the DnaB(6):DnaC(6) ring. Has ATPase activity only in the presence of DnaB and ssDNA. ssDNA binds to the central pore in the DnaB(6):DnaC(6) complex, making contacts with both subunits. It forms, in concert with DnaB protein and other prepriming proteins DnaT, N, N', N'' a prepriming protein complex on the specific site of the template DNA recognized by protein N' (By similarity).</text>
</comment>
<comment type="catalytic activity">
    <reaction evidence="1">
        <text>ATP + H2O = ADP + phosphate + H(+)</text>
        <dbReference type="Rhea" id="RHEA:13065"/>
        <dbReference type="ChEBI" id="CHEBI:15377"/>
        <dbReference type="ChEBI" id="CHEBI:15378"/>
        <dbReference type="ChEBI" id="CHEBI:30616"/>
        <dbReference type="ChEBI" id="CHEBI:43474"/>
        <dbReference type="ChEBI" id="CHEBI:456216"/>
    </reaction>
    <physiologicalReaction direction="left-to-right" evidence="1">
        <dbReference type="Rhea" id="RHEA:13066"/>
    </physiologicalReaction>
</comment>
<comment type="subunit">
    <text evidence="1">The helix loader is a DnaB(6):DnaC(6) complex with a crack opening large enough to allow ssDNA into the central cavity.</text>
</comment>
<comment type="similarity">
    <text evidence="2">Belongs to the DnaC family.</text>
</comment>
<organism>
    <name type="scientific">Escherichia coli O157:H7</name>
    <dbReference type="NCBI Taxonomy" id="83334"/>
    <lineage>
        <taxon>Bacteria</taxon>
        <taxon>Pseudomonadati</taxon>
        <taxon>Pseudomonadota</taxon>
        <taxon>Gammaproteobacteria</taxon>
        <taxon>Enterobacterales</taxon>
        <taxon>Enterobacteriaceae</taxon>
        <taxon>Escherichia</taxon>
    </lineage>
</organism>
<dbReference type="EC" id="3.6.4.-" evidence="1"/>
<dbReference type="EMBL" id="AE005174">
    <property type="protein sequence ID" value="AAG59544.1"/>
    <property type="molecule type" value="Genomic_DNA"/>
</dbReference>
<dbReference type="EMBL" id="BA000007">
    <property type="protein sequence ID" value="BAB38744.1"/>
    <property type="molecule type" value="Genomic_DNA"/>
</dbReference>
<dbReference type="PIR" id="A91294">
    <property type="entry name" value="A91294"/>
</dbReference>
<dbReference type="PIR" id="D86135">
    <property type="entry name" value="D86135"/>
</dbReference>
<dbReference type="RefSeq" id="NP_313348.1">
    <property type="nucleotide sequence ID" value="NC_002695.1"/>
</dbReference>
<dbReference type="RefSeq" id="WP_000799911.1">
    <property type="nucleotide sequence ID" value="NZ_VOAI01000002.1"/>
</dbReference>
<dbReference type="SMR" id="P0AEF2"/>
<dbReference type="STRING" id="155864.Z5961"/>
<dbReference type="GeneID" id="913577"/>
<dbReference type="GeneID" id="93777487"/>
<dbReference type="KEGG" id="ece:Z5961"/>
<dbReference type="KEGG" id="ecs:ECs_5321"/>
<dbReference type="PATRIC" id="fig|386585.9.peg.5565"/>
<dbReference type="eggNOG" id="COG1484">
    <property type="taxonomic scope" value="Bacteria"/>
</dbReference>
<dbReference type="HOGENOM" id="CLU_062999_3_1_6"/>
<dbReference type="OMA" id="DTFGNRE"/>
<dbReference type="Proteomes" id="UP000000558">
    <property type="component" value="Chromosome"/>
</dbReference>
<dbReference type="Proteomes" id="UP000002519">
    <property type="component" value="Chromosome"/>
</dbReference>
<dbReference type="GO" id="GO:1990077">
    <property type="term" value="C:primosome complex"/>
    <property type="evidence" value="ECO:0007669"/>
    <property type="project" value="UniProtKB-KW"/>
</dbReference>
<dbReference type="GO" id="GO:0005524">
    <property type="term" value="F:ATP binding"/>
    <property type="evidence" value="ECO:0007669"/>
    <property type="project" value="UniProtKB-KW"/>
</dbReference>
<dbReference type="GO" id="GO:0016887">
    <property type="term" value="F:ATP hydrolysis activity"/>
    <property type="evidence" value="ECO:0007669"/>
    <property type="project" value="InterPro"/>
</dbReference>
<dbReference type="GO" id="GO:0003677">
    <property type="term" value="F:DNA binding"/>
    <property type="evidence" value="ECO:0007669"/>
    <property type="project" value="UniProtKB-KW"/>
</dbReference>
<dbReference type="GO" id="GO:0006269">
    <property type="term" value="P:DNA replication, synthesis of primer"/>
    <property type="evidence" value="ECO:0007669"/>
    <property type="project" value="UniProtKB-KW"/>
</dbReference>
<dbReference type="CDD" id="cd00009">
    <property type="entry name" value="AAA"/>
    <property type="match status" value="1"/>
</dbReference>
<dbReference type="FunFam" id="3.40.50.300:FF:000266">
    <property type="entry name" value="DNA replication protein DnaC"/>
    <property type="match status" value="1"/>
</dbReference>
<dbReference type="Gene3D" id="3.40.50.300">
    <property type="entry name" value="P-loop containing nucleotide triphosphate hydrolases"/>
    <property type="match status" value="1"/>
</dbReference>
<dbReference type="InterPro" id="IPR003593">
    <property type="entry name" value="AAA+_ATPase"/>
</dbReference>
<dbReference type="InterPro" id="IPR028350">
    <property type="entry name" value="DNAC/IstB-like"/>
</dbReference>
<dbReference type="InterPro" id="IPR002611">
    <property type="entry name" value="IstB_ATP-bd"/>
</dbReference>
<dbReference type="InterPro" id="IPR027417">
    <property type="entry name" value="P-loop_NTPase"/>
</dbReference>
<dbReference type="NCBIfam" id="NF005931">
    <property type="entry name" value="PRK07952.1"/>
    <property type="match status" value="1"/>
</dbReference>
<dbReference type="PANTHER" id="PTHR30050">
    <property type="entry name" value="CHROMOSOMAL REPLICATION INITIATOR PROTEIN DNAA"/>
    <property type="match status" value="1"/>
</dbReference>
<dbReference type="PANTHER" id="PTHR30050:SF9">
    <property type="entry name" value="DNA REPLICATION PROTEIN DNAC"/>
    <property type="match status" value="1"/>
</dbReference>
<dbReference type="Pfam" id="PF01695">
    <property type="entry name" value="IstB_IS21"/>
    <property type="match status" value="1"/>
</dbReference>
<dbReference type="PIRSF" id="PIRSF003073">
    <property type="entry name" value="DNAC_TnpB_IstB"/>
    <property type="match status" value="1"/>
</dbReference>
<dbReference type="SMART" id="SM00382">
    <property type="entry name" value="AAA"/>
    <property type="match status" value="1"/>
</dbReference>
<dbReference type="SUPFAM" id="SSF52540">
    <property type="entry name" value="P-loop containing nucleoside triphosphate hydrolases"/>
    <property type="match status" value="1"/>
</dbReference>
<name>DNAC_ECO57</name>
<protein>
    <recommendedName>
        <fullName>Replicative helicase loader DnaC</fullName>
        <ecNumber evidence="1">3.6.4.-</ecNumber>
    </recommendedName>
    <alternativeName>
        <fullName>DNA replication protein DnaC</fullName>
    </alternativeName>
</protein>